<organism>
    <name type="scientific">Danio rerio</name>
    <name type="common">Zebrafish</name>
    <name type="synonym">Brachydanio rerio</name>
    <dbReference type="NCBI Taxonomy" id="7955"/>
    <lineage>
        <taxon>Eukaryota</taxon>
        <taxon>Metazoa</taxon>
        <taxon>Chordata</taxon>
        <taxon>Craniata</taxon>
        <taxon>Vertebrata</taxon>
        <taxon>Euteleostomi</taxon>
        <taxon>Actinopterygii</taxon>
        <taxon>Neopterygii</taxon>
        <taxon>Teleostei</taxon>
        <taxon>Ostariophysi</taxon>
        <taxon>Cypriniformes</taxon>
        <taxon>Danionidae</taxon>
        <taxon>Danioninae</taxon>
        <taxon>Danio</taxon>
    </lineage>
</organism>
<comment type="function">
    <text evidence="4">Choline-specific glycerophosphodiesterase that hydrolyzes glycerophosphocholine (GPC) and lysophosphatidylcholine (LPC) and contributes to supplying choline to the cells. Has a preference for LPC with short (12:0 and 14:0) or polyunsaturated (18:2 and 20:4) fatty acids. In vitro, hydrolyzes only choline-containing lysophospholipids, such as sphingosylphosphorylcholine (SPC), platelet-activating factor (PAF) and lysoPAF, but not other lysophospholipids.</text>
</comment>
<comment type="catalytic activity">
    <reaction evidence="4">
        <text>sn-glycerol 3-phosphocholine + H2O = phosphocholine + glycerol + H(+)</text>
        <dbReference type="Rhea" id="RHEA:19545"/>
        <dbReference type="ChEBI" id="CHEBI:15377"/>
        <dbReference type="ChEBI" id="CHEBI:15378"/>
        <dbReference type="ChEBI" id="CHEBI:16870"/>
        <dbReference type="ChEBI" id="CHEBI:17754"/>
        <dbReference type="ChEBI" id="CHEBI:295975"/>
        <dbReference type="EC" id="3.1.4.38"/>
    </reaction>
    <physiologicalReaction direction="left-to-right" evidence="4">
        <dbReference type="Rhea" id="RHEA:19546"/>
    </physiologicalReaction>
</comment>
<comment type="catalytic activity">
    <reaction evidence="4">
        <text>a 1-acyl-sn-glycero-3-phosphocholine + H2O = a 1-acyl-sn-glycerol + phosphocholine + H(+)</text>
        <dbReference type="Rhea" id="RHEA:44720"/>
        <dbReference type="ChEBI" id="CHEBI:15377"/>
        <dbReference type="ChEBI" id="CHEBI:15378"/>
        <dbReference type="ChEBI" id="CHEBI:58168"/>
        <dbReference type="ChEBI" id="CHEBI:64683"/>
        <dbReference type="ChEBI" id="CHEBI:295975"/>
    </reaction>
    <physiologicalReaction direction="left-to-right" evidence="4">
        <dbReference type="Rhea" id="RHEA:44721"/>
    </physiologicalReaction>
</comment>
<comment type="catalytic activity">
    <reaction evidence="4">
        <text>a 1-O-alkyl-sn-glycero-3-phosphocholine + H2O = a 1-O-alkyl-sn-glycerol + phosphocholine + H(+)</text>
        <dbReference type="Rhea" id="RHEA:36083"/>
        <dbReference type="ChEBI" id="CHEBI:15377"/>
        <dbReference type="ChEBI" id="CHEBI:15378"/>
        <dbReference type="ChEBI" id="CHEBI:15850"/>
        <dbReference type="ChEBI" id="CHEBI:30909"/>
        <dbReference type="ChEBI" id="CHEBI:295975"/>
    </reaction>
    <physiologicalReaction direction="left-to-right" evidence="4">
        <dbReference type="Rhea" id="RHEA:36084"/>
    </physiologicalReaction>
</comment>
<comment type="catalytic activity">
    <reaction evidence="4">
        <text>1-dodecanoyl-sn-glycero-3-phosphocholine + H2O = 1-dodecanoyl-sn-glycerol + phosphocholine + H(+)</text>
        <dbReference type="Rhea" id="RHEA:41127"/>
        <dbReference type="ChEBI" id="CHEBI:15377"/>
        <dbReference type="ChEBI" id="CHEBI:15378"/>
        <dbReference type="ChEBI" id="CHEBI:74966"/>
        <dbReference type="ChEBI" id="CHEBI:75529"/>
        <dbReference type="ChEBI" id="CHEBI:295975"/>
    </reaction>
    <physiologicalReaction direction="left-to-right" evidence="4">
        <dbReference type="Rhea" id="RHEA:41128"/>
    </physiologicalReaction>
</comment>
<comment type="catalytic activity">
    <reaction evidence="4">
        <text>1-hexadecanoyl-sn-glycero-3-phosphocholine + H2O = 1-hexadecanoyl-sn-glycerol + phosphocholine + H(+)</text>
        <dbReference type="Rhea" id="RHEA:41119"/>
        <dbReference type="ChEBI" id="CHEBI:15377"/>
        <dbReference type="ChEBI" id="CHEBI:15378"/>
        <dbReference type="ChEBI" id="CHEBI:72998"/>
        <dbReference type="ChEBI" id="CHEBI:75542"/>
        <dbReference type="ChEBI" id="CHEBI:295975"/>
    </reaction>
    <physiologicalReaction direction="left-to-right" evidence="4">
        <dbReference type="Rhea" id="RHEA:41120"/>
    </physiologicalReaction>
</comment>
<comment type="catalytic activity">
    <reaction evidence="4">
        <text>1-(5Z,8Z,11Z,14Z-eicosatetraenoyl)-sn-glycero-3-phosphocholine + H2O = 1-(5Z,8Z,11Z,14Z-eicosatetraenoyl)-sn-glycerol + phosphocholine + H(+)</text>
        <dbReference type="Rhea" id="RHEA:41003"/>
        <dbReference type="ChEBI" id="CHEBI:15377"/>
        <dbReference type="ChEBI" id="CHEBI:15378"/>
        <dbReference type="ChEBI" id="CHEBI:34071"/>
        <dbReference type="ChEBI" id="CHEBI:74344"/>
        <dbReference type="ChEBI" id="CHEBI:295975"/>
    </reaction>
    <physiologicalReaction direction="left-to-right" evidence="4">
        <dbReference type="Rhea" id="RHEA:41004"/>
    </physiologicalReaction>
</comment>
<comment type="catalytic activity">
    <reaction evidence="4">
        <text>1-tetradecanoyl-sn-glycero-3-phosphocholine + H2O = 1-tetradecanoyl-sn-glycerol + phosphocholine + H(+)</text>
        <dbReference type="Rhea" id="RHEA:40999"/>
        <dbReference type="ChEBI" id="CHEBI:15377"/>
        <dbReference type="ChEBI" id="CHEBI:15378"/>
        <dbReference type="ChEBI" id="CHEBI:64489"/>
        <dbReference type="ChEBI" id="CHEBI:75536"/>
        <dbReference type="ChEBI" id="CHEBI:295975"/>
    </reaction>
    <physiologicalReaction direction="left-to-right" evidence="4">
        <dbReference type="Rhea" id="RHEA:41000"/>
    </physiologicalReaction>
</comment>
<comment type="catalytic activity">
    <reaction evidence="4">
        <text>sphing-4-enine-phosphocholine + H2O = sphing-4-enine + phosphocholine + H(+)</text>
        <dbReference type="Rhea" id="RHEA:41095"/>
        <dbReference type="ChEBI" id="CHEBI:15377"/>
        <dbReference type="ChEBI" id="CHEBI:15378"/>
        <dbReference type="ChEBI" id="CHEBI:57756"/>
        <dbReference type="ChEBI" id="CHEBI:58906"/>
        <dbReference type="ChEBI" id="CHEBI:295975"/>
    </reaction>
    <physiologicalReaction direction="left-to-right" evidence="4">
        <dbReference type="Rhea" id="RHEA:41096"/>
    </physiologicalReaction>
</comment>
<comment type="catalytic activity">
    <reaction evidence="4">
        <text>1-(9Z-octadecenoyl)-sn-glycero-3-phosphocholine + H2O = 1-(9Z-octadecenoyl)-sn-glycerol + phosphocholine + H(+)</text>
        <dbReference type="Rhea" id="RHEA:41091"/>
        <dbReference type="ChEBI" id="CHEBI:15377"/>
        <dbReference type="ChEBI" id="CHEBI:15378"/>
        <dbReference type="ChEBI" id="CHEBI:28610"/>
        <dbReference type="ChEBI" id="CHEBI:75757"/>
        <dbReference type="ChEBI" id="CHEBI:295975"/>
    </reaction>
    <physiologicalReaction direction="left-to-right" evidence="4">
        <dbReference type="Rhea" id="RHEA:41092"/>
    </physiologicalReaction>
</comment>
<comment type="catalytic activity">
    <reaction evidence="4">
        <text>1-(9Z,12Z)-octadecadienoyl-sn-glycero-3-phosphocholine + H2O = 1-(9Z,12Z-octadecadienoyl)-sn-glycerol + phosphocholine + H(+)</text>
        <dbReference type="Rhea" id="RHEA:41115"/>
        <dbReference type="ChEBI" id="CHEBI:15377"/>
        <dbReference type="ChEBI" id="CHEBI:15378"/>
        <dbReference type="ChEBI" id="CHEBI:28733"/>
        <dbReference type="ChEBI" id="CHEBI:75561"/>
        <dbReference type="ChEBI" id="CHEBI:295975"/>
    </reaction>
    <physiologicalReaction direction="left-to-right" evidence="4">
        <dbReference type="Rhea" id="RHEA:41116"/>
    </physiologicalReaction>
</comment>
<comment type="catalytic activity">
    <reaction evidence="4">
        <text>glycero-2-phosphocholine + H2O = phosphocholine + glycerol + H(+)</text>
        <dbReference type="Rhea" id="RHEA:61684"/>
        <dbReference type="ChEBI" id="CHEBI:15377"/>
        <dbReference type="ChEBI" id="CHEBI:15378"/>
        <dbReference type="ChEBI" id="CHEBI:17754"/>
        <dbReference type="ChEBI" id="CHEBI:144950"/>
        <dbReference type="ChEBI" id="CHEBI:295975"/>
    </reaction>
    <physiologicalReaction direction="left-to-right" evidence="4">
        <dbReference type="Rhea" id="RHEA:61685"/>
    </physiologicalReaction>
</comment>
<comment type="cofactor">
    <cofactor evidence="4">
        <name>Zn(2+)</name>
        <dbReference type="ChEBI" id="CHEBI:29105"/>
    </cofactor>
    <text evidence="4">Binds 2 Zn(2+) ions per subunit.</text>
</comment>
<comment type="subcellular location">
    <subcellularLocation>
        <location evidence="1">Cell membrane</location>
        <topology evidence="1">Lipid-anchor</topology>
        <topology evidence="1">GPI-anchor</topology>
    </subcellularLocation>
</comment>
<comment type="similarity">
    <text evidence="6">Belongs to the nucleotide pyrophosphatase/phosphodiesterase family.</text>
</comment>
<reference key="1">
    <citation type="submission" date="2005-03" db="EMBL/GenBank/DDBJ databases">
        <authorList>
            <consortium name="NIH - Zebrafish Gene Collection (ZGC) project"/>
        </authorList>
    </citation>
    <scope>NUCLEOTIDE SEQUENCE [LARGE SCALE MRNA]</scope>
    <source>
        <strain>AB</strain>
        <tissue>Liver</tissue>
    </source>
</reference>
<keyword id="KW-1003">Cell membrane</keyword>
<keyword id="KW-0175">Coiled coil</keyword>
<keyword id="KW-1015">Disulfide bond</keyword>
<keyword id="KW-0325">Glycoprotein</keyword>
<keyword id="KW-0336">GPI-anchor</keyword>
<keyword id="KW-0378">Hydrolase</keyword>
<keyword id="KW-0442">Lipid degradation</keyword>
<keyword id="KW-0443">Lipid metabolism</keyword>
<keyword id="KW-0449">Lipoprotein</keyword>
<keyword id="KW-0472">Membrane</keyword>
<keyword id="KW-0479">Metal-binding</keyword>
<keyword id="KW-0597">Phosphoprotein</keyword>
<keyword id="KW-1185">Reference proteome</keyword>
<keyword id="KW-0732">Signal</keyword>
<keyword id="KW-0862">Zinc</keyword>
<protein>
    <recommendedName>
        <fullName evidence="3">Glycerophosphocholine cholinephosphodiesterase ENPP6</fullName>
        <shortName>GPC-Cpde</shortName>
        <ecNumber evidence="4">3.1.4.-</ecNumber>
        <ecNumber evidence="4">3.1.4.38</ecNumber>
    </recommendedName>
    <alternativeName>
        <fullName evidence="4">Choline-specific glycerophosphodiester phosphodiesterase</fullName>
    </alternativeName>
    <alternativeName>
        <fullName>Ectonucleotide pyrophosphatase/phosphodiesterase family member 6</fullName>
        <shortName>E-NPP 6</shortName>
        <shortName>NPP-6</shortName>
    </alternativeName>
</protein>
<dbReference type="EC" id="3.1.4.-" evidence="4"/>
<dbReference type="EC" id="3.1.4.38" evidence="4"/>
<dbReference type="EMBL" id="BC090903">
    <property type="protein sequence ID" value="AAH90903.1"/>
    <property type="molecule type" value="mRNA"/>
</dbReference>
<dbReference type="RefSeq" id="NP_001013545.1">
    <property type="nucleotide sequence ID" value="NM_001013527.1"/>
</dbReference>
<dbReference type="SMR" id="Q5BKW7"/>
<dbReference type="FunCoup" id="Q5BKW7">
    <property type="interactions" value="9"/>
</dbReference>
<dbReference type="STRING" id="7955.ENSDARP00000059230"/>
<dbReference type="GlyCosmos" id="Q5BKW7">
    <property type="glycosylation" value="5 sites, No reported glycans"/>
</dbReference>
<dbReference type="PaxDb" id="7955-ENSDARP00000059230"/>
<dbReference type="GeneID" id="791915"/>
<dbReference type="KEGG" id="dre:791915"/>
<dbReference type="AGR" id="ZFIN:ZDB-GENE-031205-1"/>
<dbReference type="CTD" id="133121"/>
<dbReference type="ZFIN" id="ZDB-GENE-031205-1">
    <property type="gene designation" value="enpp6"/>
</dbReference>
<dbReference type="eggNOG" id="KOG2645">
    <property type="taxonomic scope" value="Eukaryota"/>
</dbReference>
<dbReference type="InParanoid" id="Q5BKW7"/>
<dbReference type="OrthoDB" id="415411at2759"/>
<dbReference type="PhylomeDB" id="Q5BKW7"/>
<dbReference type="Reactome" id="R-DRE-6814848">
    <property type="pathway name" value="Glycerophospholipid catabolism"/>
</dbReference>
<dbReference type="PRO" id="PR:Q5BKW7"/>
<dbReference type="Proteomes" id="UP000000437">
    <property type="component" value="Chromosome 14"/>
</dbReference>
<dbReference type="GO" id="GO:0005886">
    <property type="term" value="C:plasma membrane"/>
    <property type="evidence" value="ECO:0000250"/>
    <property type="project" value="UniProtKB"/>
</dbReference>
<dbReference type="GO" id="GO:0098552">
    <property type="term" value="C:side of membrane"/>
    <property type="evidence" value="ECO:0007669"/>
    <property type="project" value="UniProtKB-KW"/>
</dbReference>
<dbReference type="GO" id="GO:0047390">
    <property type="term" value="F:glycerophosphocholine cholinephosphodiesterase activity"/>
    <property type="evidence" value="ECO:0000250"/>
    <property type="project" value="UniProtKB"/>
</dbReference>
<dbReference type="GO" id="GO:0008889">
    <property type="term" value="F:glycerophosphodiester phosphodiesterase activity"/>
    <property type="evidence" value="ECO:0000318"/>
    <property type="project" value="GO_Central"/>
</dbReference>
<dbReference type="GO" id="GO:0046872">
    <property type="term" value="F:metal ion binding"/>
    <property type="evidence" value="ECO:0007669"/>
    <property type="project" value="UniProtKB-KW"/>
</dbReference>
<dbReference type="GO" id="GO:0008081">
    <property type="term" value="F:phosphoric diester hydrolase activity"/>
    <property type="evidence" value="ECO:0000250"/>
    <property type="project" value="UniProtKB"/>
</dbReference>
<dbReference type="GO" id="GO:0019695">
    <property type="term" value="P:choline metabolic process"/>
    <property type="evidence" value="ECO:0000250"/>
    <property type="project" value="UniProtKB"/>
</dbReference>
<dbReference type="GO" id="GO:0016042">
    <property type="term" value="P:lipid catabolic process"/>
    <property type="evidence" value="ECO:0007669"/>
    <property type="project" value="UniProtKB-KW"/>
</dbReference>
<dbReference type="GO" id="GO:0006629">
    <property type="term" value="P:lipid metabolic process"/>
    <property type="evidence" value="ECO:0000250"/>
    <property type="project" value="UniProtKB"/>
</dbReference>
<dbReference type="CDD" id="cd16018">
    <property type="entry name" value="Enpp"/>
    <property type="match status" value="1"/>
</dbReference>
<dbReference type="FunFam" id="3.30.1360.180:FF:000001">
    <property type="entry name" value="Ectonucleotide pyrophosphatase/phosphodiesterase family member 6"/>
    <property type="match status" value="1"/>
</dbReference>
<dbReference type="FunFam" id="3.40.720.10:FF:000029">
    <property type="entry name" value="ectonucleotide pyrophosphatase/phosphodiesterase family member 6"/>
    <property type="match status" value="1"/>
</dbReference>
<dbReference type="Gene3D" id="3.30.1360.180">
    <property type="match status" value="1"/>
</dbReference>
<dbReference type="Gene3D" id="3.40.720.10">
    <property type="entry name" value="Alkaline Phosphatase, subunit A"/>
    <property type="match status" value="1"/>
</dbReference>
<dbReference type="InterPro" id="IPR017850">
    <property type="entry name" value="Alkaline_phosphatase_core_sf"/>
</dbReference>
<dbReference type="InterPro" id="IPR002591">
    <property type="entry name" value="Phosphodiest/P_Trfase"/>
</dbReference>
<dbReference type="PANTHER" id="PTHR10151">
    <property type="entry name" value="ECTONUCLEOTIDE PYROPHOSPHATASE/PHOSPHODIESTERASE"/>
    <property type="match status" value="1"/>
</dbReference>
<dbReference type="PANTHER" id="PTHR10151:SF66">
    <property type="entry name" value="GLYCEROPHOSPHOCHOLINE CHOLINEPHOSPHODIESTERASE ENPP6"/>
    <property type="match status" value="1"/>
</dbReference>
<dbReference type="Pfam" id="PF01663">
    <property type="entry name" value="Phosphodiest"/>
    <property type="match status" value="1"/>
</dbReference>
<dbReference type="SUPFAM" id="SSF53649">
    <property type="entry name" value="Alkaline phosphatase-like"/>
    <property type="match status" value="1"/>
</dbReference>
<evidence type="ECO:0000250" key="1"/>
<evidence type="ECO:0000250" key="2">
    <source>
        <dbReference type="UniProtKB" id="B0BND0"/>
    </source>
</evidence>
<evidence type="ECO:0000250" key="3">
    <source>
        <dbReference type="UniProtKB" id="Q6UWR7"/>
    </source>
</evidence>
<evidence type="ECO:0000250" key="4">
    <source>
        <dbReference type="UniProtKB" id="Q8BGN3"/>
    </source>
</evidence>
<evidence type="ECO:0000255" key="5"/>
<evidence type="ECO:0000305" key="6"/>
<accession>Q5BKW7</accession>
<sequence>MTRTLLKIYTLFILLLCRQRDANRKLLVFLIDGFRHDYMDDLHNLPGFREIVENGVKVDYLTPDFPSLSYPNYYSLMTGRHCEVHQMTGNYMWDTDTQKEFLIGTNPDSRLPMWWDGSEPLWVTMQKLGKKVYMYYWPGCEVTILGVRPTFCEEYVYNPSEKNLTDSMENALNALKSSKADMAGIYYEKIDVEGHHFGPRSPEIQRAIRSLDQAFQILNQKIREKNMRDTINVVLFSDHGMTQLKWMEKIIELDNYINMSHIIKMMDRGPVVSLWPKQDKFEEIYQNLSTADNMNVYKKHEIPDRFHYKNGQFVSTLTLVAEPGWFITENKAKLPFWNNGTEAAGGWQHGWHGYDNEFVDMRGSFLAQGPDFKSNYRAGPIRTVDVYNVLCKTLGMNPLPNNGSWSRVECMMRSSAATAGASLISCCFLLLLTLTGVC</sequence>
<proteinExistence type="evidence at transcript level"/>
<feature type="signal peptide" evidence="5">
    <location>
        <begin position="1"/>
        <end position="22"/>
    </location>
</feature>
<feature type="chain" id="PRO_0000239365" description="Glycerophosphocholine cholinephosphodiesterase ENPP6">
    <location>
        <begin position="23"/>
        <end position="415"/>
    </location>
</feature>
<feature type="propeptide" id="PRO_0000420895" description="Removed in mature form" evidence="5">
    <location>
        <begin position="416"/>
        <end position="438"/>
    </location>
</feature>
<feature type="coiled-coil region" evidence="5">
    <location>
        <begin position="162"/>
        <end position="226"/>
    </location>
</feature>
<feature type="active site" description="Nucleophile" evidence="5">
    <location>
        <position position="69"/>
    </location>
</feature>
<feature type="binding site" evidence="4">
    <location>
        <position position="32"/>
    </location>
    <ligand>
        <name>substrate</name>
    </ligand>
</feature>
<feature type="binding site" evidence="4">
    <location>
        <position position="32"/>
    </location>
    <ligand>
        <name>Zn(2+)</name>
        <dbReference type="ChEBI" id="CHEBI:29105"/>
        <label>1</label>
        <note>catalytic</note>
    </ligand>
</feature>
<feature type="binding site" evidence="4">
    <location>
        <position position="69"/>
    </location>
    <ligand>
        <name>substrate</name>
    </ligand>
</feature>
<feature type="binding site" evidence="4">
    <location>
        <position position="69"/>
    </location>
    <ligand>
        <name>Zn(2+)</name>
        <dbReference type="ChEBI" id="CHEBI:29105"/>
        <label>1</label>
        <note>catalytic</note>
    </ligand>
</feature>
<feature type="binding site" evidence="4">
    <location>
        <position position="90"/>
    </location>
    <ligand>
        <name>substrate</name>
    </ligand>
</feature>
<feature type="binding site" evidence="4">
    <location>
        <position position="191"/>
    </location>
    <ligand>
        <name>substrate</name>
    </ligand>
</feature>
<feature type="binding site" evidence="4">
    <location>
        <position position="191"/>
    </location>
    <ligand>
        <name>Zn(2+)</name>
        <dbReference type="ChEBI" id="CHEBI:29105"/>
        <label>2</label>
        <note>catalytic</note>
    </ligand>
</feature>
<feature type="binding site" evidence="4">
    <location>
        <position position="195"/>
    </location>
    <ligand>
        <name>Zn(2+)</name>
        <dbReference type="ChEBI" id="CHEBI:29105"/>
        <label>2</label>
        <note>catalytic</note>
    </ligand>
</feature>
<feature type="binding site" evidence="4">
    <location>
        <position position="238"/>
    </location>
    <ligand>
        <name>Zn(2+)</name>
        <dbReference type="ChEBI" id="CHEBI:29105"/>
        <label>1</label>
        <note>catalytic</note>
    </ligand>
</feature>
<feature type="binding site" evidence="4">
    <location>
        <position position="239"/>
    </location>
    <ligand>
        <name>substrate</name>
    </ligand>
</feature>
<feature type="binding site" evidence="4">
    <location>
        <position position="239"/>
    </location>
    <ligand>
        <name>Zn(2+)</name>
        <dbReference type="ChEBI" id="CHEBI:29105"/>
        <label>1</label>
        <note>catalytic</note>
    </ligand>
</feature>
<feature type="binding site" evidence="4">
    <location>
        <position position="352"/>
    </location>
    <ligand>
        <name>substrate</name>
    </ligand>
</feature>
<feature type="binding site" evidence="4">
    <location>
        <position position="352"/>
    </location>
    <ligand>
        <name>Zn(2+)</name>
        <dbReference type="ChEBI" id="CHEBI:29105"/>
        <label>2</label>
        <note>catalytic</note>
    </ligand>
</feature>
<feature type="modified residue" description="Phosphoserine" evidence="2">
    <location>
        <position position="69"/>
    </location>
</feature>
<feature type="lipid moiety-binding region" description="GPI-anchor amidated serine" evidence="5">
    <location>
        <position position="415"/>
    </location>
</feature>
<feature type="glycosylation site" description="N-linked (GlcNAc...) asparagine" evidence="5">
    <location>
        <position position="163"/>
    </location>
</feature>
<feature type="glycosylation site" description="N-linked (GlcNAc...) asparagine" evidence="5">
    <location>
        <position position="258"/>
    </location>
</feature>
<feature type="glycosylation site" description="N-linked (GlcNAc...) asparagine" evidence="5">
    <location>
        <position position="287"/>
    </location>
</feature>
<feature type="glycosylation site" description="N-linked (GlcNAc...) asparagine" evidence="4">
    <location>
        <position position="339"/>
    </location>
</feature>
<feature type="glycosylation site" description="N-linked (GlcNAc...) asparagine" evidence="4">
    <location>
        <position position="402"/>
    </location>
</feature>
<feature type="disulfide bond" evidence="4">
    <location>
        <begin position="140"/>
        <end position="152"/>
    </location>
</feature>
<gene>
    <name evidence="3" type="primary">enpp6</name>
    <name type="ORF">zgc:103605</name>
</gene>
<name>ENPP6_DANRE</name>